<proteinExistence type="inferred from homology"/>
<organism>
    <name type="scientific">Shewanella loihica (strain ATCC BAA-1088 / PV-4)</name>
    <dbReference type="NCBI Taxonomy" id="323850"/>
    <lineage>
        <taxon>Bacteria</taxon>
        <taxon>Pseudomonadati</taxon>
        <taxon>Pseudomonadota</taxon>
        <taxon>Gammaproteobacteria</taxon>
        <taxon>Alteromonadales</taxon>
        <taxon>Shewanellaceae</taxon>
        <taxon>Shewanella</taxon>
    </lineage>
</organism>
<keyword id="KW-0414">Isoprene biosynthesis</keyword>
<keyword id="KW-0456">Lyase</keyword>
<keyword id="KW-0479">Metal-binding</keyword>
<keyword id="KW-1185">Reference proteome</keyword>
<gene>
    <name evidence="1" type="primary">ispF</name>
    <name type="ordered locus">Shew_1208</name>
</gene>
<sequence length="161" mass="17226">MNIRIGHGFDVHKFGGELPLILGGVEVPYDTGLVAHSDGDVVLHAISDAILGAMALGDIGKHFPDTDPDFKGADSRVLLRHCYQLALDKGYRLGNLDVTIIAQAPKMLPHIQAIRECLSADLESDIEAINVKATTTEKLGFTGRKEGIAVEAVVLMCAAPR</sequence>
<protein>
    <recommendedName>
        <fullName evidence="1">2-C-methyl-D-erythritol 2,4-cyclodiphosphate synthase</fullName>
        <shortName evidence="1">MECDP-synthase</shortName>
        <shortName evidence="1">MECPP-synthase</shortName>
        <shortName evidence="1">MECPS</shortName>
        <ecNumber evidence="1">4.6.1.12</ecNumber>
    </recommendedName>
</protein>
<name>ISPF_SHELP</name>
<accession>A3QC80</accession>
<comment type="function">
    <text evidence="1">Involved in the biosynthesis of isopentenyl diphosphate (IPP) and dimethylallyl diphosphate (DMAPP), two major building blocks of isoprenoid compounds. Catalyzes the conversion of 4-diphosphocytidyl-2-C-methyl-D-erythritol 2-phosphate (CDP-ME2P) to 2-C-methyl-D-erythritol 2,4-cyclodiphosphate (ME-CPP) with a corresponding release of cytidine 5-monophosphate (CMP).</text>
</comment>
<comment type="catalytic activity">
    <reaction evidence="1">
        <text>4-CDP-2-C-methyl-D-erythritol 2-phosphate = 2-C-methyl-D-erythritol 2,4-cyclic diphosphate + CMP</text>
        <dbReference type="Rhea" id="RHEA:23864"/>
        <dbReference type="ChEBI" id="CHEBI:57919"/>
        <dbReference type="ChEBI" id="CHEBI:58483"/>
        <dbReference type="ChEBI" id="CHEBI:60377"/>
        <dbReference type="EC" id="4.6.1.12"/>
    </reaction>
</comment>
<comment type="cofactor">
    <cofactor evidence="1">
        <name>a divalent metal cation</name>
        <dbReference type="ChEBI" id="CHEBI:60240"/>
    </cofactor>
    <text evidence="1">Binds 1 divalent metal cation per subunit.</text>
</comment>
<comment type="pathway">
    <text evidence="1">Isoprenoid biosynthesis; isopentenyl diphosphate biosynthesis via DXP pathway; isopentenyl diphosphate from 1-deoxy-D-xylulose 5-phosphate: step 4/6.</text>
</comment>
<comment type="subunit">
    <text evidence="1">Homotrimer.</text>
</comment>
<comment type="similarity">
    <text evidence="1">Belongs to the IspF family.</text>
</comment>
<reference key="1">
    <citation type="submission" date="2007-03" db="EMBL/GenBank/DDBJ databases">
        <title>Complete sequence of Shewanella loihica PV-4.</title>
        <authorList>
            <consortium name="US DOE Joint Genome Institute"/>
            <person name="Copeland A."/>
            <person name="Lucas S."/>
            <person name="Lapidus A."/>
            <person name="Barry K."/>
            <person name="Detter J.C."/>
            <person name="Glavina del Rio T."/>
            <person name="Hammon N."/>
            <person name="Israni S."/>
            <person name="Dalin E."/>
            <person name="Tice H."/>
            <person name="Pitluck S."/>
            <person name="Chain P."/>
            <person name="Malfatti S."/>
            <person name="Shin M."/>
            <person name="Vergez L."/>
            <person name="Schmutz J."/>
            <person name="Larimer F."/>
            <person name="Land M."/>
            <person name="Hauser L."/>
            <person name="Kyrpides N."/>
            <person name="Mikhailova N."/>
            <person name="Romine M.F."/>
            <person name="Serres G."/>
            <person name="Fredrickson J."/>
            <person name="Tiedje J."/>
            <person name="Richardson P."/>
        </authorList>
    </citation>
    <scope>NUCLEOTIDE SEQUENCE [LARGE SCALE GENOMIC DNA]</scope>
    <source>
        <strain>ATCC BAA-1088 / PV-4</strain>
    </source>
</reference>
<dbReference type="EC" id="4.6.1.12" evidence="1"/>
<dbReference type="EMBL" id="CP000606">
    <property type="protein sequence ID" value="ABO23078.1"/>
    <property type="molecule type" value="Genomic_DNA"/>
</dbReference>
<dbReference type="RefSeq" id="WP_011865010.1">
    <property type="nucleotide sequence ID" value="NC_009092.1"/>
</dbReference>
<dbReference type="SMR" id="A3QC80"/>
<dbReference type="STRING" id="323850.Shew_1208"/>
<dbReference type="KEGG" id="slo:Shew_1208"/>
<dbReference type="eggNOG" id="COG0245">
    <property type="taxonomic scope" value="Bacteria"/>
</dbReference>
<dbReference type="HOGENOM" id="CLU_084630_2_0_6"/>
<dbReference type="OrthoDB" id="9804336at2"/>
<dbReference type="UniPathway" id="UPA00056">
    <property type="reaction ID" value="UER00095"/>
</dbReference>
<dbReference type="Proteomes" id="UP000001558">
    <property type="component" value="Chromosome"/>
</dbReference>
<dbReference type="GO" id="GO:0008685">
    <property type="term" value="F:2-C-methyl-D-erythritol 2,4-cyclodiphosphate synthase activity"/>
    <property type="evidence" value="ECO:0007669"/>
    <property type="project" value="UniProtKB-UniRule"/>
</dbReference>
<dbReference type="GO" id="GO:0046872">
    <property type="term" value="F:metal ion binding"/>
    <property type="evidence" value="ECO:0007669"/>
    <property type="project" value="UniProtKB-KW"/>
</dbReference>
<dbReference type="GO" id="GO:0019288">
    <property type="term" value="P:isopentenyl diphosphate biosynthetic process, methylerythritol 4-phosphate pathway"/>
    <property type="evidence" value="ECO:0007669"/>
    <property type="project" value="UniProtKB-UniRule"/>
</dbReference>
<dbReference type="GO" id="GO:0016114">
    <property type="term" value="P:terpenoid biosynthetic process"/>
    <property type="evidence" value="ECO:0007669"/>
    <property type="project" value="InterPro"/>
</dbReference>
<dbReference type="CDD" id="cd00554">
    <property type="entry name" value="MECDP_synthase"/>
    <property type="match status" value="1"/>
</dbReference>
<dbReference type="FunFam" id="3.30.1330.50:FF:000001">
    <property type="entry name" value="2-C-methyl-D-erythritol 2,4-cyclodiphosphate synthase"/>
    <property type="match status" value="1"/>
</dbReference>
<dbReference type="Gene3D" id="3.30.1330.50">
    <property type="entry name" value="2-C-methyl-D-erythritol 2,4-cyclodiphosphate synthase"/>
    <property type="match status" value="1"/>
</dbReference>
<dbReference type="HAMAP" id="MF_00107">
    <property type="entry name" value="IspF"/>
    <property type="match status" value="1"/>
</dbReference>
<dbReference type="InterPro" id="IPR003526">
    <property type="entry name" value="MECDP_synthase"/>
</dbReference>
<dbReference type="InterPro" id="IPR020555">
    <property type="entry name" value="MECDP_synthase_CS"/>
</dbReference>
<dbReference type="InterPro" id="IPR036571">
    <property type="entry name" value="MECDP_synthase_sf"/>
</dbReference>
<dbReference type="NCBIfam" id="TIGR00151">
    <property type="entry name" value="ispF"/>
    <property type="match status" value="1"/>
</dbReference>
<dbReference type="PANTHER" id="PTHR43181">
    <property type="entry name" value="2-C-METHYL-D-ERYTHRITOL 2,4-CYCLODIPHOSPHATE SYNTHASE, CHLOROPLASTIC"/>
    <property type="match status" value="1"/>
</dbReference>
<dbReference type="PANTHER" id="PTHR43181:SF1">
    <property type="entry name" value="2-C-METHYL-D-ERYTHRITOL 2,4-CYCLODIPHOSPHATE SYNTHASE, CHLOROPLASTIC"/>
    <property type="match status" value="1"/>
</dbReference>
<dbReference type="Pfam" id="PF02542">
    <property type="entry name" value="YgbB"/>
    <property type="match status" value="1"/>
</dbReference>
<dbReference type="SUPFAM" id="SSF69765">
    <property type="entry name" value="IpsF-like"/>
    <property type="match status" value="1"/>
</dbReference>
<dbReference type="PROSITE" id="PS01350">
    <property type="entry name" value="ISPF"/>
    <property type="match status" value="1"/>
</dbReference>
<feature type="chain" id="PRO_1000022880" description="2-C-methyl-D-erythritol 2,4-cyclodiphosphate synthase">
    <location>
        <begin position="1"/>
        <end position="161"/>
    </location>
</feature>
<feature type="binding site" evidence="1">
    <location>
        <begin position="10"/>
        <end position="12"/>
    </location>
    <ligand>
        <name>4-CDP-2-C-methyl-D-erythritol 2-phosphate</name>
        <dbReference type="ChEBI" id="CHEBI:57919"/>
    </ligand>
</feature>
<feature type="binding site" evidence="1">
    <location>
        <position position="10"/>
    </location>
    <ligand>
        <name>a divalent metal cation</name>
        <dbReference type="ChEBI" id="CHEBI:60240"/>
    </ligand>
</feature>
<feature type="binding site" evidence="1">
    <location>
        <position position="12"/>
    </location>
    <ligand>
        <name>a divalent metal cation</name>
        <dbReference type="ChEBI" id="CHEBI:60240"/>
    </ligand>
</feature>
<feature type="binding site" evidence="1">
    <location>
        <begin position="36"/>
        <end position="37"/>
    </location>
    <ligand>
        <name>4-CDP-2-C-methyl-D-erythritol 2-phosphate</name>
        <dbReference type="ChEBI" id="CHEBI:57919"/>
    </ligand>
</feature>
<feature type="binding site" evidence="1">
    <location>
        <position position="44"/>
    </location>
    <ligand>
        <name>a divalent metal cation</name>
        <dbReference type="ChEBI" id="CHEBI:60240"/>
    </ligand>
</feature>
<feature type="binding site" evidence="1">
    <location>
        <begin position="58"/>
        <end position="60"/>
    </location>
    <ligand>
        <name>4-CDP-2-C-methyl-D-erythritol 2-phosphate</name>
        <dbReference type="ChEBI" id="CHEBI:57919"/>
    </ligand>
</feature>
<feature type="binding site" evidence="1">
    <location>
        <begin position="63"/>
        <end position="67"/>
    </location>
    <ligand>
        <name>4-CDP-2-C-methyl-D-erythritol 2-phosphate</name>
        <dbReference type="ChEBI" id="CHEBI:57919"/>
    </ligand>
</feature>
<feature type="binding site" evidence="1">
    <location>
        <begin position="102"/>
        <end position="108"/>
    </location>
    <ligand>
        <name>4-CDP-2-C-methyl-D-erythritol 2-phosphate</name>
        <dbReference type="ChEBI" id="CHEBI:57919"/>
    </ligand>
</feature>
<feature type="binding site" evidence="1">
    <location>
        <begin position="134"/>
        <end position="137"/>
    </location>
    <ligand>
        <name>4-CDP-2-C-methyl-D-erythritol 2-phosphate</name>
        <dbReference type="ChEBI" id="CHEBI:57919"/>
    </ligand>
</feature>
<feature type="binding site" evidence="1">
    <location>
        <position position="141"/>
    </location>
    <ligand>
        <name>4-CDP-2-C-methyl-D-erythritol 2-phosphate</name>
        <dbReference type="ChEBI" id="CHEBI:57919"/>
    </ligand>
</feature>
<feature type="binding site" evidence="1">
    <location>
        <position position="144"/>
    </location>
    <ligand>
        <name>4-CDP-2-C-methyl-D-erythritol 2-phosphate</name>
        <dbReference type="ChEBI" id="CHEBI:57919"/>
    </ligand>
</feature>
<feature type="site" description="Transition state stabilizer" evidence="1">
    <location>
        <position position="36"/>
    </location>
</feature>
<feature type="site" description="Transition state stabilizer" evidence="1">
    <location>
        <position position="135"/>
    </location>
</feature>
<evidence type="ECO:0000255" key="1">
    <source>
        <dbReference type="HAMAP-Rule" id="MF_00107"/>
    </source>
</evidence>